<organism>
    <name type="scientific">Geobacillus thermodenitrificans (strain NG80-2)</name>
    <dbReference type="NCBI Taxonomy" id="420246"/>
    <lineage>
        <taxon>Bacteria</taxon>
        <taxon>Bacillati</taxon>
        <taxon>Bacillota</taxon>
        <taxon>Bacilli</taxon>
        <taxon>Bacillales</taxon>
        <taxon>Anoxybacillaceae</taxon>
        <taxon>Geobacillus</taxon>
    </lineage>
</organism>
<keyword id="KW-0963">Cytoplasm</keyword>
<evidence type="ECO:0000255" key="1">
    <source>
        <dbReference type="HAMAP-Rule" id="MF_01114"/>
    </source>
</evidence>
<proteinExistence type="inferred from homology"/>
<comment type="function">
    <text evidence="1">Modulates RecA activity.</text>
</comment>
<comment type="subcellular location">
    <subcellularLocation>
        <location evidence="1">Cytoplasm</location>
    </subcellularLocation>
</comment>
<comment type="similarity">
    <text evidence="1">Belongs to the RecX family.</text>
</comment>
<reference key="1">
    <citation type="journal article" date="2007" name="Proc. Natl. Acad. Sci. U.S.A.">
        <title>Genome and proteome of long-chain alkane degrading Geobacillus thermodenitrificans NG80-2 isolated from a deep-subsurface oil reservoir.</title>
        <authorList>
            <person name="Feng L."/>
            <person name="Wang W."/>
            <person name="Cheng J."/>
            <person name="Ren Y."/>
            <person name="Zhao G."/>
            <person name="Gao C."/>
            <person name="Tang Y."/>
            <person name="Liu X."/>
            <person name="Han W."/>
            <person name="Peng X."/>
            <person name="Liu R."/>
            <person name="Wang L."/>
        </authorList>
    </citation>
    <scope>NUCLEOTIDE SEQUENCE [LARGE SCALE GENOMIC DNA]</scope>
    <source>
        <strain>NG80-2</strain>
    </source>
</reference>
<feature type="chain" id="PRO_1000065173" description="Regulatory protein RecX">
    <location>
        <begin position="1"/>
        <end position="269"/>
    </location>
</feature>
<gene>
    <name evidence="1" type="primary">recX</name>
    <name type="ordered locus">GTNG_0458</name>
</gene>
<sequence length="269" mass="31315">MGTIVDITVTKENAERFWIVIHRDNESALKLTVDQDVLLKFRLKKGMIIDDALLRDIVYADGIKKAYQQALYFLAHRMRSEQEIVEHLRKKGVVDPVIEEVLEKLRAERYVDDEAFAAAYVRTQKNTSTKGPRLIQAELERLGVPASVIEQSLVEYSFNEQVIAARSLYEKAKKQRRAESARAFLERVKQQLMRKGFSHEVIAIVLADGSGHTEEEEREALHVQAEKIRRRYAHHPRPLYEQKMRQALYRKGFSLALIDEWLRRQDDDG</sequence>
<dbReference type="EMBL" id="CP000557">
    <property type="protein sequence ID" value="ABO65840.1"/>
    <property type="molecule type" value="Genomic_DNA"/>
</dbReference>
<dbReference type="RefSeq" id="WP_008881566.1">
    <property type="nucleotide sequence ID" value="NC_009328.1"/>
</dbReference>
<dbReference type="SMR" id="A4IKI6"/>
<dbReference type="GeneID" id="87621937"/>
<dbReference type="KEGG" id="gtn:GTNG_0458"/>
<dbReference type="eggNOG" id="COG2137">
    <property type="taxonomic scope" value="Bacteria"/>
</dbReference>
<dbReference type="HOGENOM" id="CLU_066607_4_0_9"/>
<dbReference type="Proteomes" id="UP000001578">
    <property type="component" value="Chromosome"/>
</dbReference>
<dbReference type="GO" id="GO:0005737">
    <property type="term" value="C:cytoplasm"/>
    <property type="evidence" value="ECO:0007669"/>
    <property type="project" value="UniProtKB-SubCell"/>
</dbReference>
<dbReference type="GO" id="GO:0006282">
    <property type="term" value="P:regulation of DNA repair"/>
    <property type="evidence" value="ECO:0007669"/>
    <property type="project" value="UniProtKB-UniRule"/>
</dbReference>
<dbReference type="Gene3D" id="1.10.10.10">
    <property type="entry name" value="Winged helix-like DNA-binding domain superfamily/Winged helix DNA-binding domain"/>
    <property type="match status" value="4"/>
</dbReference>
<dbReference type="HAMAP" id="MF_01114">
    <property type="entry name" value="RecX"/>
    <property type="match status" value="1"/>
</dbReference>
<dbReference type="InterPro" id="IPR053926">
    <property type="entry name" value="RecX_HTH_1st"/>
</dbReference>
<dbReference type="InterPro" id="IPR053924">
    <property type="entry name" value="RecX_HTH_2nd"/>
</dbReference>
<dbReference type="InterPro" id="IPR053925">
    <property type="entry name" value="RecX_HTH_3rd"/>
</dbReference>
<dbReference type="InterPro" id="IPR003783">
    <property type="entry name" value="Regulatory_RecX"/>
</dbReference>
<dbReference type="InterPro" id="IPR036388">
    <property type="entry name" value="WH-like_DNA-bd_sf"/>
</dbReference>
<dbReference type="NCBIfam" id="NF010733">
    <property type="entry name" value="PRK14135.1"/>
    <property type="match status" value="1"/>
</dbReference>
<dbReference type="PANTHER" id="PTHR33602">
    <property type="entry name" value="REGULATORY PROTEIN RECX FAMILY PROTEIN"/>
    <property type="match status" value="1"/>
</dbReference>
<dbReference type="PANTHER" id="PTHR33602:SF1">
    <property type="entry name" value="REGULATORY PROTEIN RECX FAMILY PROTEIN"/>
    <property type="match status" value="1"/>
</dbReference>
<dbReference type="Pfam" id="PF21982">
    <property type="entry name" value="RecX_HTH1"/>
    <property type="match status" value="1"/>
</dbReference>
<dbReference type="Pfam" id="PF02631">
    <property type="entry name" value="RecX_HTH2"/>
    <property type="match status" value="1"/>
</dbReference>
<dbReference type="Pfam" id="PF21981">
    <property type="entry name" value="RecX_HTH3"/>
    <property type="match status" value="2"/>
</dbReference>
<protein>
    <recommendedName>
        <fullName evidence="1">Regulatory protein RecX</fullName>
    </recommendedName>
</protein>
<name>RECX_GEOTN</name>
<accession>A4IKI6</accession>